<accession>P82087</accession>
<reference key="1">
    <citation type="journal article" date="1999" name="Rapid Commun. Mass Spectrom.">
        <title>Caerulein-like peptides from the skin glands of the Australian blue mountains tree frog Litoria citropa. Part 1. Sequence determination using electrospray mass spectrometry.</title>
        <authorList>
            <person name="Wabnitz P.A."/>
            <person name="Bowie J.H."/>
            <person name="Tyler M.J."/>
        </authorList>
    </citation>
    <scope>PROTEIN SEQUENCE</scope>
    <scope>PYROGLUTAMATE FORMATION AT GLN-1</scope>
    <scope>SULFATION AT TYR-4</scope>
    <scope>AMIDATION AT PHE-11</scope>
    <scope>MASS SPECTROMETRY</scope>
    <source>
        <tissue>Skin secretion</tissue>
    </source>
</reference>
<dbReference type="GO" id="GO:0005576">
    <property type="term" value="C:extracellular region"/>
    <property type="evidence" value="ECO:0007669"/>
    <property type="project" value="UniProtKB-SubCell"/>
</dbReference>
<dbReference type="GO" id="GO:0006952">
    <property type="term" value="P:defense response"/>
    <property type="evidence" value="ECO:0007669"/>
    <property type="project" value="UniProtKB-KW"/>
</dbReference>
<dbReference type="GO" id="GO:0008217">
    <property type="term" value="P:regulation of blood pressure"/>
    <property type="evidence" value="ECO:0007669"/>
    <property type="project" value="UniProtKB-KW"/>
</dbReference>
<evidence type="ECO:0000269" key="1">
    <source>
    </source>
</evidence>
<evidence type="ECO:0000305" key="2"/>
<sequence>QQDYTGAHMDF</sequence>
<keyword id="KW-0027">Amidation</keyword>
<keyword id="KW-0878">Amphibian defense peptide</keyword>
<keyword id="KW-0903">Direct protein sequencing</keyword>
<keyword id="KW-0382">Hypotensive agent</keyword>
<keyword id="KW-0873">Pyrrolidone carboxylic acid</keyword>
<keyword id="KW-0964">Secreted</keyword>
<keyword id="KW-0765">Sulfation</keyword>
<organism>
    <name type="scientific">Ranoidea citropa</name>
    <name type="common">Australian Blue Mountains tree frog</name>
    <name type="synonym">Litoria citropa</name>
    <dbReference type="NCBI Taxonomy" id="94770"/>
    <lineage>
        <taxon>Eukaryota</taxon>
        <taxon>Metazoa</taxon>
        <taxon>Chordata</taxon>
        <taxon>Craniata</taxon>
        <taxon>Vertebrata</taxon>
        <taxon>Euteleostomi</taxon>
        <taxon>Amphibia</taxon>
        <taxon>Batrachia</taxon>
        <taxon>Anura</taxon>
        <taxon>Neobatrachia</taxon>
        <taxon>Hyloidea</taxon>
        <taxon>Hylidae</taxon>
        <taxon>Pelodryadinae</taxon>
        <taxon>Ranoidea</taxon>
    </lineage>
</organism>
<comment type="function">
    <text evidence="2">Hypotensive neuropeptide.</text>
</comment>
<comment type="subcellular location">
    <subcellularLocation>
        <location>Secreted</location>
    </subcellularLocation>
</comment>
<comment type="tissue specificity">
    <text>Expressed by the skin dorsal glands.</text>
</comment>
<comment type="PTM">
    <text evidence="1">Isoform 2.1Y4 differs from isoform 2.1 in not being sulfated.</text>
</comment>
<comment type="mass spectrometry"/>
<comment type="similarity">
    <text evidence="2">Belongs to the gastrin/cholecystokinin family.</text>
</comment>
<protein>
    <recommendedName>
        <fullName>Caerulein-2.1/2.1Y4</fullName>
    </recommendedName>
</protein>
<feature type="peptide" id="PRO_0000043880" description="Caerulein-2.1/2.1Y4">
    <location>
        <begin position="1"/>
        <end position="11"/>
    </location>
</feature>
<feature type="modified residue" description="Pyrrolidone carboxylic acid" evidence="1">
    <location>
        <position position="1"/>
    </location>
</feature>
<feature type="modified residue" description="Sulfotyrosine" evidence="1">
    <location>
        <position position="4"/>
    </location>
</feature>
<feature type="modified residue" description="Phenylalanine amide" evidence="1">
    <location>
        <position position="11"/>
    </location>
</feature>
<name>CAE21_RANCI</name>
<proteinExistence type="evidence at protein level"/>